<accession>Q9N563</accession>
<comment type="function">
    <text evidence="2">Encodes at least three neuropeptides: two of the periviscerokinin family (APHPSSALLVPYPRV-amide and LYMARV-amide) and one pyrokinin (AFFYTPRI-amide).</text>
</comment>
<comment type="function">
    <molecule>AFFYTPRI-amide</molecule>
    <text evidence="2">Putative ligand for neuromedin U receptor homolog nmur-2.</text>
</comment>
<comment type="tissue specificity">
    <text evidence="2">Expressed in two pairs of neurons in the anterior part of the nervous system (at protein level).</text>
</comment>
<reference evidence="5" key="1">
    <citation type="journal article" date="1998" name="Science">
        <title>Genome sequence of the nematode C. elegans: a platform for investigating biology.</title>
        <authorList>
            <consortium name="The C. elegans sequencing consortium"/>
        </authorList>
    </citation>
    <scope>NUCLEOTIDE SEQUENCE [LARGE SCALE GENOMIC DNA]</scope>
    <source>
        <strain evidence="5">Bristol N2</strain>
    </source>
</reference>
<reference evidence="4" key="2">
    <citation type="journal article" date="2009" name="Biochem. Biophys. Res. Commun.">
        <title>A neuromedin-pyrokinin-like neuropeptide signaling system in Caenorhabditis elegans.</title>
        <authorList>
            <person name="Lindemans M."/>
            <person name="Janssen T."/>
            <person name="Husson S.J."/>
            <person name="Meelkop E."/>
            <person name="Temmerman L."/>
            <person name="Clynen E."/>
            <person name="Mertens I."/>
            <person name="Schoofs L."/>
        </authorList>
    </citation>
    <scope>FUNCTION</scope>
    <scope>TISSUE SPECIFICITY</scope>
</reference>
<dbReference type="EMBL" id="BX284606">
    <property type="protein sequence ID" value="CCD67515.1"/>
    <property type="molecule type" value="Genomic_DNA"/>
</dbReference>
<dbReference type="RefSeq" id="NP_001370577.1">
    <property type="nucleotide sequence ID" value="NM_001383591.2"/>
</dbReference>
<dbReference type="RefSeq" id="NP_508991.1">
    <property type="nucleotide sequence ID" value="NM_076590.3"/>
</dbReference>
<dbReference type="FunCoup" id="Q9N563">
    <property type="interactions" value="1540"/>
</dbReference>
<dbReference type="STRING" id="6239.Y23B4A.2.1"/>
<dbReference type="PaxDb" id="6239-Y23B4A.2"/>
<dbReference type="EnsemblMetazoa" id="Y23B4A.2.1">
    <property type="protein sequence ID" value="Y23B4A.2.1"/>
    <property type="gene ID" value="WBGene00021268"/>
</dbReference>
<dbReference type="EnsemblMetazoa" id="Y23B4A.2.2">
    <property type="protein sequence ID" value="Y23B4A.2.2"/>
    <property type="gene ID" value="WBGene00021268"/>
</dbReference>
<dbReference type="GeneID" id="189521"/>
<dbReference type="UCSC" id="Y23B4A.2">
    <property type="organism name" value="c. elegans"/>
</dbReference>
<dbReference type="AGR" id="WB:WBGene00021268"/>
<dbReference type="WormBase" id="Y23B4A.2">
    <property type="protein sequence ID" value="CE21455"/>
    <property type="gene ID" value="WBGene00021268"/>
    <property type="gene designation" value="capa-1"/>
</dbReference>
<dbReference type="eggNOG" id="ENOG502TIKM">
    <property type="taxonomic scope" value="Eukaryota"/>
</dbReference>
<dbReference type="HOGENOM" id="CLU_2499953_0_0_1"/>
<dbReference type="InParanoid" id="Q9N563"/>
<dbReference type="OMA" id="LYMARVG"/>
<dbReference type="OrthoDB" id="5808547at2759"/>
<dbReference type="PRO" id="PR:Q9N563"/>
<dbReference type="Proteomes" id="UP000001940">
    <property type="component" value="Chromosome X"/>
</dbReference>
<dbReference type="Bgee" id="WBGene00021268">
    <property type="expression patterns" value="Expressed in larva and 3 other cell types or tissues"/>
</dbReference>
<dbReference type="GO" id="GO:0001664">
    <property type="term" value="F:G protein-coupled receptor binding"/>
    <property type="evidence" value="ECO:0000353"/>
    <property type="project" value="WormBase"/>
</dbReference>
<dbReference type="GO" id="GO:0007218">
    <property type="term" value="P:neuropeptide signaling pathway"/>
    <property type="evidence" value="ECO:0000314"/>
    <property type="project" value="WormBase"/>
</dbReference>
<name>CAPAR_CAEEL</name>
<gene>
    <name evidence="6" type="primary">capa-1</name>
    <name evidence="6" type="synonym">nlp-44</name>
    <name evidence="6" type="ORF">Y23B4A.2</name>
</gene>
<proteinExistence type="evidence at protein level"/>
<evidence type="ECO:0000255" key="1"/>
<evidence type="ECO:0000269" key="2">
    <source>
    </source>
</evidence>
<evidence type="ECO:0000303" key="3">
    <source>
    </source>
</evidence>
<evidence type="ECO:0000305" key="4"/>
<evidence type="ECO:0000312" key="5">
    <source>
        <dbReference type="Proteomes" id="UP000001940"/>
    </source>
</evidence>
<evidence type="ECO:0000312" key="6">
    <source>
        <dbReference type="WormBase" id="Y23B4A.2"/>
    </source>
</evidence>
<organism evidence="5">
    <name type="scientific">Caenorhabditis elegans</name>
    <dbReference type="NCBI Taxonomy" id="6239"/>
    <lineage>
        <taxon>Eukaryota</taxon>
        <taxon>Metazoa</taxon>
        <taxon>Ecdysozoa</taxon>
        <taxon>Nematoda</taxon>
        <taxon>Chromadorea</taxon>
        <taxon>Rhabditida</taxon>
        <taxon>Rhabditina</taxon>
        <taxon>Rhabditomorpha</taxon>
        <taxon>Rhabditoidea</taxon>
        <taxon>Rhabditidae</taxon>
        <taxon>Peloderinae</taxon>
        <taxon>Caenorhabditis</taxon>
    </lineage>
</organism>
<protein>
    <recommendedName>
        <fullName evidence="4">Neuropeptide precursor capa-1</fullName>
    </recommendedName>
    <alternativeName>
        <fullName evidence="6">CAPA (insect neuropeptide) related protein</fullName>
    </alternativeName>
    <component>
        <recommendedName>
            <fullName evidence="3">AFFYTPRI-amide</fullName>
            <shortName evidence="3">PK-like</shortName>
            <shortName evidence="3">pyrokinin-like</shortName>
        </recommendedName>
    </component>
    <component>
        <recommendedName>
            <fullName evidence="3">APHPSSALLVPYPRV-amide</fullName>
            <shortName evidence="3">PVK-1</shortName>
        </recommendedName>
    </component>
    <component>
        <recommendedName>
            <fullName evidence="3">LYMARV-amide</fullName>
            <shortName evidence="3">PVK-2</shortName>
        </recommendedName>
    </component>
</protein>
<keyword id="KW-0527">Neuropeptide</keyword>
<keyword id="KW-1185">Reference proteome</keyword>
<keyword id="KW-0732">Signal</keyword>
<feature type="signal peptide" evidence="1">
    <location>
        <begin position="1"/>
        <end position="19"/>
    </location>
</feature>
<feature type="chain" id="PRO_5004335314" description="Neuropeptide precursor capa-1" evidence="1">
    <location>
        <begin position="20"/>
        <end position="86"/>
    </location>
</feature>
<feature type="peptide" id="PRO_0000458220" description="APHPSSALLVPYPRV-amide" evidence="3">
    <location>
        <begin position="33"/>
        <end position="47"/>
    </location>
</feature>
<feature type="peptide" id="PRO_0000458221" description="LYMARV-amide" evidence="3">
    <location>
        <begin position="68"/>
        <end position="73"/>
    </location>
</feature>
<feature type="peptide" id="PRO_0000458222" description="AFFYTPRI-amide" evidence="3">
    <location>
        <begin position="77"/>
        <end position="84"/>
    </location>
</feature>
<sequence>MLLWIVATLLIFSLPVSTALDYNDFSLQRIARAPHPSSALLVPYPRVGKRSNILNNNSESQNSVQKRLYMARVGKRAFFYTPRIGK</sequence>